<reference key="1">
    <citation type="journal article" date="1997" name="DNA Res.">
        <title>Structural analysis of Arabidopsis thaliana chromosome 5. II. Sequence features of the regions of 1,044,062 bp covered by thirteen physically assigned P1 clones.</title>
        <authorList>
            <person name="Kotani H."/>
            <person name="Nakamura Y."/>
            <person name="Sato S."/>
            <person name="Kaneko T."/>
            <person name="Asamizu E."/>
            <person name="Miyajima N."/>
            <person name="Tabata S."/>
        </authorList>
    </citation>
    <scope>NUCLEOTIDE SEQUENCE [LARGE SCALE GENOMIC DNA]</scope>
    <source>
        <strain>cv. Columbia</strain>
    </source>
</reference>
<reference key="2">
    <citation type="journal article" date="2017" name="Plant J.">
        <title>Araport11: a complete reannotation of the Arabidopsis thaliana reference genome.</title>
        <authorList>
            <person name="Cheng C.Y."/>
            <person name="Krishnakumar V."/>
            <person name="Chan A.P."/>
            <person name="Thibaud-Nissen F."/>
            <person name="Schobel S."/>
            <person name="Town C.D."/>
        </authorList>
    </citation>
    <scope>GENOME REANNOTATION</scope>
    <source>
        <strain>cv. Columbia</strain>
    </source>
</reference>
<reference key="3">
    <citation type="journal article" date="1999" name="Nucleic Acids Res.">
        <title>The DEAD box RNA helicase family in Arabidopsis thaliana.</title>
        <authorList>
            <person name="Aubourg S."/>
            <person name="Kreis M."/>
            <person name="Lecharny A."/>
        </authorList>
    </citation>
    <scope>NUCLEOTIDE SEQUENCE [MRNA] OF 90-684</scope>
    <source>
        <strain>cv. Columbia</strain>
    </source>
</reference>
<reference key="4">
    <citation type="journal article" date="2004" name="Plant Biotechnol. J.">
        <title>DEAD-box RNA helicases in Arabidopsis thaliana: establishing a link between quantitative expression, gene structure and evolution of a family of genes.</title>
        <authorList>
            <person name="Mingam A."/>
            <person name="Toffano-Nioche C."/>
            <person name="Brunaud V."/>
            <person name="Boudet N."/>
            <person name="Kreis M."/>
            <person name="Lecharny A."/>
        </authorList>
    </citation>
    <scope>GENE FAMILY</scope>
    <scope>NOMENCLATURE</scope>
</reference>
<reference key="5">
    <citation type="journal article" date="2006" name="Nucleic Acids Res.">
        <title>Phosphoproteomics reveals extensive in vivo phosphorylation of Arabidopsis proteins involved in RNA metabolism.</title>
        <authorList>
            <person name="de la Fuente van Bentem S."/>
            <person name="Anrather D."/>
            <person name="Roitinger E."/>
            <person name="Djamei A."/>
            <person name="Hufnagl T."/>
            <person name="Barta A."/>
            <person name="Csaszar E."/>
            <person name="Dohnal I."/>
            <person name="Lecourieux D."/>
            <person name="Hirt H."/>
        </authorList>
    </citation>
    <scope>PHOSPHORYLATION [LARGE SCALE ANALYSIS] AT THR-109 AND SER-110</scope>
    <scope>IDENTIFICATION BY MASS SPECTROMETRY [LARGE SCALE ANALYSIS]</scope>
</reference>
<reference key="6">
    <citation type="journal article" date="2009" name="J. Proteomics">
        <title>Phosphoproteomic analysis of nuclei-enriched fractions from Arabidopsis thaliana.</title>
        <authorList>
            <person name="Jones A.M.E."/>
            <person name="MacLean D."/>
            <person name="Studholme D.J."/>
            <person name="Serna-Sanz A."/>
            <person name="Andreasson E."/>
            <person name="Rathjen J.P."/>
            <person name="Peck S.C."/>
        </authorList>
    </citation>
    <scope>IDENTIFICATION BY MASS SPECTROMETRY [LARGE SCALE ANALYSIS]</scope>
    <source>
        <strain>cv. Columbia</strain>
    </source>
</reference>
<reference key="7">
    <citation type="journal article" date="2009" name="Plant Physiol.">
        <title>Large-scale Arabidopsis phosphoproteome profiling reveals novel chloroplast kinase substrates and phosphorylation networks.</title>
        <authorList>
            <person name="Reiland S."/>
            <person name="Messerli G."/>
            <person name="Baerenfaller K."/>
            <person name="Gerrits B."/>
            <person name="Endler A."/>
            <person name="Grossmann J."/>
            <person name="Gruissem W."/>
            <person name="Baginsky S."/>
        </authorList>
    </citation>
    <scope>PHOSPHORYLATION [LARGE SCALE ANALYSIS] AT THR-109 AND SER-110</scope>
    <scope>IDENTIFICATION BY MASS SPECTROMETRY [LARGE SCALE ANALYSIS]</scope>
</reference>
<reference key="8">
    <citation type="journal article" date="2013" name="PLoS ONE">
        <title>Genome-wide comparative in silico analysis of the RNA helicase gene family in Zea mays and Glycine max: a comparison with Arabidopsis and Oryza sativa.</title>
        <authorList>
            <person name="Xu R."/>
            <person name="Zhang S."/>
            <person name="Huang J."/>
            <person name="Zheng C."/>
        </authorList>
    </citation>
    <scope>GENE FAMILY</scope>
</reference>
<accession>Q9FNM7</accession>
<accession>Q9ZRZ9</accession>
<proteinExistence type="evidence at protein level"/>
<gene>
    <name type="primary">RH26</name>
    <name type="ordered locus">At5g08610</name>
    <name type="ORF">MAH20.17</name>
</gene>
<evidence type="ECO:0000255" key="1">
    <source>
        <dbReference type="PROSITE-ProRule" id="PRU00541"/>
    </source>
</evidence>
<evidence type="ECO:0000255" key="2">
    <source>
        <dbReference type="PROSITE-ProRule" id="PRU00542"/>
    </source>
</evidence>
<evidence type="ECO:0000256" key="3">
    <source>
        <dbReference type="SAM" id="MobiDB-lite"/>
    </source>
</evidence>
<evidence type="ECO:0000305" key="4"/>
<evidence type="ECO:0007744" key="5">
    <source>
    </source>
</evidence>
<evidence type="ECO:0007744" key="6">
    <source>
    </source>
</evidence>
<keyword id="KW-0067">ATP-binding</keyword>
<keyword id="KW-0347">Helicase</keyword>
<keyword id="KW-0378">Hydrolase</keyword>
<keyword id="KW-0547">Nucleotide-binding</keyword>
<keyword id="KW-0597">Phosphoprotein</keyword>
<keyword id="KW-1185">Reference proteome</keyword>
<keyword id="KW-0694">RNA-binding</keyword>
<feature type="chain" id="PRO_0000239166" description="DEAD-box ATP-dependent RNA helicase 26">
    <location>
        <begin position="1"/>
        <end position="850"/>
    </location>
</feature>
<feature type="domain" description="Helicase ATP-binding" evidence="1">
    <location>
        <begin position="413"/>
        <end position="596"/>
    </location>
</feature>
<feature type="domain" description="Helicase C-terminal" evidence="2">
    <location>
        <begin position="630"/>
        <end position="777"/>
    </location>
</feature>
<feature type="region of interest" description="Disordered" evidence="3">
    <location>
        <begin position="60"/>
        <end position="82"/>
    </location>
</feature>
<feature type="region of interest" description="Disordered" evidence="3">
    <location>
        <begin position="106"/>
        <end position="350"/>
    </location>
</feature>
<feature type="short sequence motif" description="Q motif">
    <location>
        <begin position="382"/>
        <end position="410"/>
    </location>
</feature>
<feature type="short sequence motif" description="DEAD box">
    <location>
        <begin position="544"/>
        <end position="547"/>
    </location>
</feature>
<feature type="compositionally biased region" description="Basic and acidic residues" evidence="3">
    <location>
        <begin position="61"/>
        <end position="71"/>
    </location>
</feature>
<feature type="compositionally biased region" description="Basic and acidic residues" evidence="3">
    <location>
        <begin position="118"/>
        <end position="140"/>
    </location>
</feature>
<feature type="compositionally biased region" description="Basic and acidic residues" evidence="3">
    <location>
        <begin position="284"/>
        <end position="299"/>
    </location>
</feature>
<feature type="compositionally biased region" description="Acidic residues" evidence="3">
    <location>
        <begin position="315"/>
        <end position="325"/>
    </location>
</feature>
<feature type="compositionally biased region" description="Acidic residues" evidence="3">
    <location>
        <begin position="336"/>
        <end position="350"/>
    </location>
</feature>
<feature type="binding site" evidence="1">
    <location>
        <begin position="426"/>
        <end position="433"/>
    </location>
    <ligand>
        <name>ATP</name>
        <dbReference type="ChEBI" id="CHEBI:30616"/>
    </ligand>
</feature>
<feature type="modified residue" description="Phosphothreonine" evidence="5 6">
    <location>
        <position position="109"/>
    </location>
</feature>
<feature type="modified residue" description="Phosphoserine" evidence="5 6">
    <location>
        <position position="110"/>
    </location>
</feature>
<comment type="catalytic activity">
    <reaction>
        <text>ATP + H2O = ADP + phosphate + H(+)</text>
        <dbReference type="Rhea" id="RHEA:13065"/>
        <dbReference type="ChEBI" id="CHEBI:15377"/>
        <dbReference type="ChEBI" id="CHEBI:15378"/>
        <dbReference type="ChEBI" id="CHEBI:30616"/>
        <dbReference type="ChEBI" id="CHEBI:43474"/>
        <dbReference type="ChEBI" id="CHEBI:456216"/>
        <dbReference type="EC" id="3.6.4.13"/>
    </reaction>
</comment>
<comment type="domain">
    <text>The Q motif is unique to and characteristic of the DEAD box family of RNA helicases and controls ATP binding and hydrolysis.</text>
</comment>
<comment type="similarity">
    <text evidence="4">Belongs to the DEAD box helicase family.</text>
</comment>
<comment type="sequence caution" evidence="4">
    <conflict type="erroneous initiation">
        <sequence resource="EMBL-CDS" id="BAB10010"/>
    </conflict>
</comment>
<organism>
    <name type="scientific">Arabidopsis thaliana</name>
    <name type="common">Mouse-ear cress</name>
    <dbReference type="NCBI Taxonomy" id="3702"/>
    <lineage>
        <taxon>Eukaryota</taxon>
        <taxon>Viridiplantae</taxon>
        <taxon>Streptophyta</taxon>
        <taxon>Embryophyta</taxon>
        <taxon>Tracheophyta</taxon>
        <taxon>Spermatophyta</taxon>
        <taxon>Magnoliopsida</taxon>
        <taxon>eudicotyledons</taxon>
        <taxon>Gunneridae</taxon>
        <taxon>Pentapetalae</taxon>
        <taxon>rosids</taxon>
        <taxon>malvids</taxon>
        <taxon>Brassicales</taxon>
        <taxon>Brassicaceae</taxon>
        <taxon>Camelineae</taxon>
        <taxon>Arabidopsis</taxon>
    </lineage>
</organism>
<protein>
    <recommendedName>
        <fullName>DEAD-box ATP-dependent RNA helicase 26</fullName>
        <ecNumber>3.6.4.13</ecNumber>
    </recommendedName>
</protein>
<name>RH26_ARATH</name>
<dbReference type="EC" id="3.6.4.13"/>
<dbReference type="EMBL" id="AB006697">
    <property type="protein sequence ID" value="BAB10010.1"/>
    <property type="status" value="ALT_INIT"/>
    <property type="molecule type" value="Genomic_DNA"/>
</dbReference>
<dbReference type="EMBL" id="CP002688">
    <property type="protein sequence ID" value="AED91329.1"/>
    <property type="molecule type" value="Genomic_DNA"/>
</dbReference>
<dbReference type="EMBL" id="AJ010474">
    <property type="protein sequence ID" value="CAA09213.1"/>
    <property type="molecule type" value="mRNA"/>
</dbReference>
<dbReference type="PIR" id="T51747">
    <property type="entry name" value="T51747"/>
</dbReference>
<dbReference type="RefSeq" id="NP_196478.2">
    <property type="nucleotide sequence ID" value="NM_120948.4"/>
</dbReference>
<dbReference type="SMR" id="Q9FNM7"/>
<dbReference type="FunCoup" id="Q9FNM7">
    <property type="interactions" value="305"/>
</dbReference>
<dbReference type="STRING" id="3702.Q9FNM7"/>
<dbReference type="iPTMnet" id="Q9FNM7"/>
<dbReference type="PaxDb" id="3702-AT5G08610.1"/>
<dbReference type="ProteomicsDB" id="236944"/>
<dbReference type="EnsemblPlants" id="AT5G08610.1">
    <property type="protein sequence ID" value="AT5G08610.1"/>
    <property type="gene ID" value="AT5G08610"/>
</dbReference>
<dbReference type="GeneID" id="830762"/>
<dbReference type="Gramene" id="AT5G08610.1">
    <property type="protein sequence ID" value="AT5G08610.1"/>
    <property type="gene ID" value="AT5G08610"/>
</dbReference>
<dbReference type="KEGG" id="ath:AT5G08610"/>
<dbReference type="Araport" id="AT5G08610"/>
<dbReference type="TAIR" id="AT5G08610">
    <property type="gene designation" value="PDE340"/>
</dbReference>
<dbReference type="eggNOG" id="KOG0342">
    <property type="taxonomic scope" value="Eukaryota"/>
</dbReference>
<dbReference type="HOGENOM" id="CLU_003041_26_6_1"/>
<dbReference type="InParanoid" id="Q9FNM7"/>
<dbReference type="OMA" id="LAPWEEK"/>
<dbReference type="OrthoDB" id="193716at2759"/>
<dbReference type="PhylomeDB" id="Q9FNM7"/>
<dbReference type="PRO" id="PR:Q9FNM7"/>
<dbReference type="Proteomes" id="UP000006548">
    <property type="component" value="Chromosome 5"/>
</dbReference>
<dbReference type="ExpressionAtlas" id="Q9FNM7">
    <property type="expression patterns" value="baseline and differential"/>
</dbReference>
<dbReference type="GO" id="GO:0009507">
    <property type="term" value="C:chloroplast"/>
    <property type="evidence" value="ECO:0007005"/>
    <property type="project" value="TAIR"/>
</dbReference>
<dbReference type="GO" id="GO:0005524">
    <property type="term" value="F:ATP binding"/>
    <property type="evidence" value="ECO:0007669"/>
    <property type="project" value="UniProtKB-KW"/>
</dbReference>
<dbReference type="GO" id="GO:0016887">
    <property type="term" value="F:ATP hydrolysis activity"/>
    <property type="evidence" value="ECO:0007669"/>
    <property type="project" value="RHEA"/>
</dbReference>
<dbReference type="GO" id="GO:0003729">
    <property type="term" value="F:mRNA binding"/>
    <property type="evidence" value="ECO:0000314"/>
    <property type="project" value="TAIR"/>
</dbReference>
<dbReference type="GO" id="GO:0003724">
    <property type="term" value="F:RNA helicase activity"/>
    <property type="evidence" value="ECO:0007669"/>
    <property type="project" value="UniProtKB-EC"/>
</dbReference>
<dbReference type="CDD" id="cd17964">
    <property type="entry name" value="DEADc_MSS116"/>
    <property type="match status" value="1"/>
</dbReference>
<dbReference type="CDD" id="cd18787">
    <property type="entry name" value="SF2_C_DEAD"/>
    <property type="match status" value="1"/>
</dbReference>
<dbReference type="FunFam" id="3.40.50.300:FF:002640">
    <property type="entry name" value="DEAD-box ATP-dependent RNA helicase 25"/>
    <property type="match status" value="1"/>
</dbReference>
<dbReference type="FunFam" id="3.40.50.300:FF:002327">
    <property type="entry name" value="DEAD-box ATP-dependent RNA helicase 26"/>
    <property type="match status" value="1"/>
</dbReference>
<dbReference type="Gene3D" id="3.40.50.300">
    <property type="entry name" value="P-loop containing nucleotide triphosphate hydrolases"/>
    <property type="match status" value="2"/>
</dbReference>
<dbReference type="InterPro" id="IPR011545">
    <property type="entry name" value="DEAD/DEAH_box_helicase_dom"/>
</dbReference>
<dbReference type="InterPro" id="IPR014001">
    <property type="entry name" value="Helicase_ATP-bd"/>
</dbReference>
<dbReference type="InterPro" id="IPR001650">
    <property type="entry name" value="Helicase_C-like"/>
</dbReference>
<dbReference type="InterPro" id="IPR027417">
    <property type="entry name" value="P-loop_NTPase"/>
</dbReference>
<dbReference type="InterPro" id="IPR014014">
    <property type="entry name" value="RNA_helicase_DEAD_Q_motif"/>
</dbReference>
<dbReference type="PANTHER" id="PTHR24031">
    <property type="entry name" value="RNA HELICASE"/>
    <property type="match status" value="1"/>
</dbReference>
<dbReference type="Pfam" id="PF00270">
    <property type="entry name" value="DEAD"/>
    <property type="match status" value="1"/>
</dbReference>
<dbReference type="Pfam" id="PF00271">
    <property type="entry name" value="Helicase_C"/>
    <property type="match status" value="1"/>
</dbReference>
<dbReference type="SMART" id="SM00487">
    <property type="entry name" value="DEXDc"/>
    <property type="match status" value="1"/>
</dbReference>
<dbReference type="SMART" id="SM00490">
    <property type="entry name" value="HELICc"/>
    <property type="match status" value="1"/>
</dbReference>
<dbReference type="SUPFAM" id="SSF52540">
    <property type="entry name" value="P-loop containing nucleoside triphosphate hydrolases"/>
    <property type="match status" value="1"/>
</dbReference>
<dbReference type="PROSITE" id="PS51192">
    <property type="entry name" value="HELICASE_ATP_BIND_1"/>
    <property type="match status" value="1"/>
</dbReference>
<dbReference type="PROSITE" id="PS51194">
    <property type="entry name" value="HELICASE_CTER"/>
    <property type="match status" value="1"/>
</dbReference>
<dbReference type="PROSITE" id="PS51195">
    <property type="entry name" value="Q_MOTIF"/>
    <property type="match status" value="1"/>
</dbReference>
<sequence length="850" mass="94186">MSSKFPLGVRFITHSLPCTRLASMNSGALIYSFRSVPVLSKAFPFRLKYIGLGSRVNFSTRPERSQPEFARRSGAGGEIRASKSLIEDEAELSDWVSDLRTSSLRGKFTSDEDNADPEVVRRNVDRDTSRGPRRGREGQSDRFGGAKRGKEGEMDRFGSPNRRRTSGEPADSFGNKRLGDREGSRNGRVQGKSSESSFRGRSDRNVDSGSSFRGRSDKNVDSGSSFRGRNDRNVDSGSSFRGRSDRNVDSGSSFRGRSDRNVDSGSSFRGRNDRNVDSGSSFRGRNDRNVESGFRREPGSENNRGLGKQTRGLSLEEEDSSDDDENRVGLGNIDDLPSEDSSDEDDENDEPLIKKAASAKAVQTDKPTGEHVKTSDSYLSKTRFDQFPLSPLSLKAIKDAGFETMTVVQEATLPIILQGKDVLAKAKTGTGKTVAFLLPAIEAVIKSPPASRDSRQPPIIVLVVCPTRELASQAAAEANTLLKYHPSIGVQVVIGGTKLPTEQRRMQTNPCQILVATPGRLKDHIENTSGFATRLMGVKVLVLDEADHLLDMGFRRDIERIIAAVPKQRQTFLFSATVPEEVRQICHVALKRDHEFINCVQEGSGETHQKVTQMYMIASLDRHFSLLHVLLKEHIADNVDYKVIIFCTTAMVTRLVADLLSQLSLNVREIHSRKPQSYRTRVSDEFRKSKAIILVTSDVSARGVDYPDVSLVVQMGLPSDREQYIHRLGRTGRKGKEGEGVLLLAPWEEYFMSSVKDLPITKSPLPPIDPEAVKRVQKGLSQVEMKNKEAAYQAWLGYYKSQKMIARDTTRLVELANEFSRSMGLDSPPAIPKNVLGKMGLKNVPGLRTK</sequence>